<comment type="function">
    <text evidence="2 3">Component of the PEX13-PEX14 docking complex, a translocon channel that specifically mediates the import of peroxisomal cargo proteins bound to PEX5 receptor (By similarity). The PEX13-PEX14 docking complex forms a large import pore which can be opened to a diameter of about 9 nm (By similarity). Mechanistically, PEX5 receptor along with cargo proteins associates with the PEX14 subunit of the PEX13-PEX14 docking complex in the cytosol, leading to the insertion of the receptor into the organelle membrane with the concomitant translocation of the cargo into the peroxisome matrix. Involved in the import of PTS1- and PTS2-type containing proteins (By similarity).</text>
</comment>
<comment type="subunit">
    <text evidence="3">Interacts (via SH3 domain) with PEX14 (via SH3-binding motif); forming the PEX13-PEX14 docking complex. Interacts with PEX19.</text>
</comment>
<comment type="subcellular location">
    <subcellularLocation>
        <location evidence="3">Peroxisome membrane</location>
        <topology evidence="4">Multi-pass membrane protein</topology>
    </subcellularLocation>
</comment>
<comment type="similarity">
    <text evidence="8">Belongs to the peroxin-13 family.</text>
</comment>
<accession>Q9D0K1</accession>
<accession>Q3U5T1</accession>
<accession>Q8CCJ5</accession>
<accession>Q8CCW5</accession>
<accession>Q99MM2</accession>
<accession>Q9EPK1</accession>
<evidence type="ECO:0000250" key="1">
    <source>
        <dbReference type="UniProtKB" id="D4A2Y9"/>
    </source>
</evidence>
<evidence type="ECO:0000250" key="2">
    <source>
        <dbReference type="UniProtKB" id="P80667"/>
    </source>
</evidence>
<evidence type="ECO:0000250" key="3">
    <source>
        <dbReference type="UniProtKB" id="Q92968"/>
    </source>
</evidence>
<evidence type="ECO:0000255" key="4"/>
<evidence type="ECO:0000255" key="5">
    <source>
        <dbReference type="PROSITE-ProRule" id="PRU00192"/>
    </source>
</evidence>
<evidence type="ECO:0000256" key="6">
    <source>
        <dbReference type="SAM" id="MobiDB-lite"/>
    </source>
</evidence>
<evidence type="ECO:0000303" key="7">
    <source>
    </source>
</evidence>
<evidence type="ECO:0000305" key="8"/>
<evidence type="ECO:0000312" key="9">
    <source>
        <dbReference type="MGI" id="MGI:1919379"/>
    </source>
</evidence>
<evidence type="ECO:0007744" key="10">
    <source>
    </source>
</evidence>
<evidence type="ECO:0007829" key="11">
    <source>
        <dbReference type="PDB" id="1WXU"/>
    </source>
</evidence>
<reference key="1">
    <citation type="journal article" date="2002" name="Genomics">
        <title>Pex13, the mouse ortholog of the human peroxisome biogenesis disorder PEX13 gene: gene structure, tissue expression, and localization of the protein to peroxisomes.</title>
        <authorList>
            <person name="Bjoerkman J."/>
            <person name="Gould S.J."/>
            <person name="Crane D.I."/>
        </authorList>
    </citation>
    <scope>NUCLEOTIDE SEQUENCE [MRNA]</scope>
    <source>
        <strain>129/SvJ</strain>
    </source>
</reference>
<reference key="2">
    <citation type="submission" date="2000-12" db="EMBL/GenBank/DDBJ databases">
        <title>Cloning of mouse peroxins.</title>
        <authorList>
            <person name="Van Veldhoven P.P."/>
        </authorList>
    </citation>
    <scope>NUCLEOTIDE SEQUENCE [MRNA]</scope>
</reference>
<reference key="3">
    <citation type="journal article" date="2005" name="Science">
        <title>The transcriptional landscape of the mammalian genome.</title>
        <authorList>
            <person name="Carninci P."/>
            <person name="Kasukawa T."/>
            <person name="Katayama S."/>
            <person name="Gough J."/>
            <person name="Frith M.C."/>
            <person name="Maeda N."/>
            <person name="Oyama R."/>
            <person name="Ravasi T."/>
            <person name="Lenhard B."/>
            <person name="Wells C."/>
            <person name="Kodzius R."/>
            <person name="Shimokawa K."/>
            <person name="Bajic V.B."/>
            <person name="Brenner S.E."/>
            <person name="Batalov S."/>
            <person name="Forrest A.R."/>
            <person name="Zavolan M."/>
            <person name="Davis M.J."/>
            <person name="Wilming L.G."/>
            <person name="Aidinis V."/>
            <person name="Allen J.E."/>
            <person name="Ambesi-Impiombato A."/>
            <person name="Apweiler R."/>
            <person name="Aturaliya R.N."/>
            <person name="Bailey T.L."/>
            <person name="Bansal M."/>
            <person name="Baxter L."/>
            <person name="Beisel K.W."/>
            <person name="Bersano T."/>
            <person name="Bono H."/>
            <person name="Chalk A.M."/>
            <person name="Chiu K.P."/>
            <person name="Choudhary V."/>
            <person name="Christoffels A."/>
            <person name="Clutterbuck D.R."/>
            <person name="Crowe M.L."/>
            <person name="Dalla E."/>
            <person name="Dalrymple B.P."/>
            <person name="de Bono B."/>
            <person name="Della Gatta G."/>
            <person name="di Bernardo D."/>
            <person name="Down T."/>
            <person name="Engstrom P."/>
            <person name="Fagiolini M."/>
            <person name="Faulkner G."/>
            <person name="Fletcher C.F."/>
            <person name="Fukushima T."/>
            <person name="Furuno M."/>
            <person name="Futaki S."/>
            <person name="Gariboldi M."/>
            <person name="Georgii-Hemming P."/>
            <person name="Gingeras T.R."/>
            <person name="Gojobori T."/>
            <person name="Green R.E."/>
            <person name="Gustincich S."/>
            <person name="Harbers M."/>
            <person name="Hayashi Y."/>
            <person name="Hensch T.K."/>
            <person name="Hirokawa N."/>
            <person name="Hill D."/>
            <person name="Huminiecki L."/>
            <person name="Iacono M."/>
            <person name="Ikeo K."/>
            <person name="Iwama A."/>
            <person name="Ishikawa T."/>
            <person name="Jakt M."/>
            <person name="Kanapin A."/>
            <person name="Katoh M."/>
            <person name="Kawasawa Y."/>
            <person name="Kelso J."/>
            <person name="Kitamura H."/>
            <person name="Kitano H."/>
            <person name="Kollias G."/>
            <person name="Krishnan S.P."/>
            <person name="Kruger A."/>
            <person name="Kummerfeld S.K."/>
            <person name="Kurochkin I.V."/>
            <person name="Lareau L.F."/>
            <person name="Lazarevic D."/>
            <person name="Lipovich L."/>
            <person name="Liu J."/>
            <person name="Liuni S."/>
            <person name="McWilliam S."/>
            <person name="Madan Babu M."/>
            <person name="Madera M."/>
            <person name="Marchionni L."/>
            <person name="Matsuda H."/>
            <person name="Matsuzawa S."/>
            <person name="Miki H."/>
            <person name="Mignone F."/>
            <person name="Miyake S."/>
            <person name="Morris K."/>
            <person name="Mottagui-Tabar S."/>
            <person name="Mulder N."/>
            <person name="Nakano N."/>
            <person name="Nakauchi H."/>
            <person name="Ng P."/>
            <person name="Nilsson R."/>
            <person name="Nishiguchi S."/>
            <person name="Nishikawa S."/>
            <person name="Nori F."/>
            <person name="Ohara O."/>
            <person name="Okazaki Y."/>
            <person name="Orlando V."/>
            <person name="Pang K.C."/>
            <person name="Pavan W.J."/>
            <person name="Pavesi G."/>
            <person name="Pesole G."/>
            <person name="Petrovsky N."/>
            <person name="Piazza S."/>
            <person name="Reed J."/>
            <person name="Reid J.F."/>
            <person name="Ring B.Z."/>
            <person name="Ringwald M."/>
            <person name="Rost B."/>
            <person name="Ruan Y."/>
            <person name="Salzberg S.L."/>
            <person name="Sandelin A."/>
            <person name="Schneider C."/>
            <person name="Schoenbach C."/>
            <person name="Sekiguchi K."/>
            <person name="Semple C.A."/>
            <person name="Seno S."/>
            <person name="Sessa L."/>
            <person name="Sheng Y."/>
            <person name="Shibata Y."/>
            <person name="Shimada H."/>
            <person name="Shimada K."/>
            <person name="Silva D."/>
            <person name="Sinclair B."/>
            <person name="Sperling S."/>
            <person name="Stupka E."/>
            <person name="Sugiura K."/>
            <person name="Sultana R."/>
            <person name="Takenaka Y."/>
            <person name="Taki K."/>
            <person name="Tammoja K."/>
            <person name="Tan S.L."/>
            <person name="Tang S."/>
            <person name="Taylor M.S."/>
            <person name="Tegner J."/>
            <person name="Teichmann S.A."/>
            <person name="Ueda H.R."/>
            <person name="van Nimwegen E."/>
            <person name="Verardo R."/>
            <person name="Wei C.L."/>
            <person name="Yagi K."/>
            <person name="Yamanishi H."/>
            <person name="Zabarovsky E."/>
            <person name="Zhu S."/>
            <person name="Zimmer A."/>
            <person name="Hide W."/>
            <person name="Bult C."/>
            <person name="Grimmond S.M."/>
            <person name="Teasdale R.D."/>
            <person name="Liu E.T."/>
            <person name="Brusic V."/>
            <person name="Quackenbush J."/>
            <person name="Wahlestedt C."/>
            <person name="Mattick J.S."/>
            <person name="Hume D.A."/>
            <person name="Kai C."/>
            <person name="Sasaki D."/>
            <person name="Tomaru Y."/>
            <person name="Fukuda S."/>
            <person name="Kanamori-Katayama M."/>
            <person name="Suzuki M."/>
            <person name="Aoki J."/>
            <person name="Arakawa T."/>
            <person name="Iida J."/>
            <person name="Imamura K."/>
            <person name="Itoh M."/>
            <person name="Kato T."/>
            <person name="Kawaji H."/>
            <person name="Kawagashira N."/>
            <person name="Kawashima T."/>
            <person name="Kojima M."/>
            <person name="Kondo S."/>
            <person name="Konno H."/>
            <person name="Nakano K."/>
            <person name="Ninomiya N."/>
            <person name="Nishio T."/>
            <person name="Okada M."/>
            <person name="Plessy C."/>
            <person name="Shibata K."/>
            <person name="Shiraki T."/>
            <person name="Suzuki S."/>
            <person name="Tagami M."/>
            <person name="Waki K."/>
            <person name="Watahiki A."/>
            <person name="Okamura-Oho Y."/>
            <person name="Suzuki H."/>
            <person name="Kawai J."/>
            <person name="Hayashizaki Y."/>
        </authorList>
    </citation>
    <scope>NUCLEOTIDE SEQUENCE [LARGE SCALE MRNA]</scope>
    <source>
        <strain>C57BL/6J</strain>
        <tissue>Amnion</tissue>
        <tissue>Cerebellum</tissue>
        <tissue>Embryo</tissue>
        <tissue>Testis</tissue>
    </source>
</reference>
<reference key="4">
    <citation type="journal article" date="2004" name="Genome Res.">
        <title>The status, quality, and expansion of the NIH full-length cDNA project: the Mammalian Gene Collection (MGC).</title>
        <authorList>
            <consortium name="The MGC Project Team"/>
        </authorList>
    </citation>
    <scope>NUCLEOTIDE SEQUENCE [LARGE SCALE MRNA]</scope>
    <source>
        <strain>FVB/N</strain>
        <tissue>Mammary tumor</tissue>
    </source>
</reference>
<reference key="5">
    <citation type="journal article" date="2007" name="Proc. Natl. Acad. Sci. U.S.A.">
        <title>Large-scale phosphorylation analysis of mouse liver.</title>
        <authorList>
            <person name="Villen J."/>
            <person name="Beausoleil S.A."/>
            <person name="Gerber S.A."/>
            <person name="Gygi S.P."/>
        </authorList>
    </citation>
    <scope>PHOSPHORYLATION [LARGE SCALE ANALYSIS] AT SER-356</scope>
    <scope>IDENTIFICATION BY MASS SPECTROMETRY [LARGE SCALE ANALYSIS]</scope>
    <source>
        <tissue>Liver</tissue>
    </source>
</reference>
<reference key="6">
    <citation type="journal article" date="2010" name="Cell">
        <title>A tissue-specific atlas of mouse protein phosphorylation and expression.</title>
        <authorList>
            <person name="Huttlin E.L."/>
            <person name="Jedrychowski M.P."/>
            <person name="Elias J.E."/>
            <person name="Goswami T."/>
            <person name="Rad R."/>
            <person name="Beausoleil S.A."/>
            <person name="Villen J."/>
            <person name="Haas W."/>
            <person name="Sowa M.E."/>
            <person name="Gygi S.P."/>
        </authorList>
    </citation>
    <scope>IDENTIFICATION BY MASS SPECTROMETRY [LARGE SCALE ANALYSIS]</scope>
    <source>
        <tissue>Testis</tissue>
    </source>
</reference>
<reference key="7">
    <citation type="submission" date="2006-01" db="PDB data bank">
        <title>Solution structure of the SH3 domain of mouse peroxisomal biogenesis factor 13.</title>
        <authorList>
            <consortium name="RIKEN structural genomics initiative (RSGI)"/>
        </authorList>
    </citation>
    <scope>STRUCTURE BY NMR OF 267-347</scope>
</reference>
<keyword id="KW-0002">3D-structure</keyword>
<keyword id="KW-0472">Membrane</keyword>
<keyword id="KW-0576">Peroxisome</keyword>
<keyword id="KW-0597">Phosphoprotein</keyword>
<keyword id="KW-0653">Protein transport</keyword>
<keyword id="KW-1185">Reference proteome</keyword>
<keyword id="KW-0728">SH3 domain</keyword>
<keyword id="KW-0811">Translocation</keyword>
<keyword id="KW-0812">Transmembrane</keyword>
<keyword id="KW-1133">Transmembrane helix</keyword>
<keyword id="KW-0813">Transport</keyword>
<organism>
    <name type="scientific">Mus musculus</name>
    <name type="common">Mouse</name>
    <dbReference type="NCBI Taxonomy" id="10090"/>
    <lineage>
        <taxon>Eukaryota</taxon>
        <taxon>Metazoa</taxon>
        <taxon>Chordata</taxon>
        <taxon>Craniata</taxon>
        <taxon>Vertebrata</taxon>
        <taxon>Euteleostomi</taxon>
        <taxon>Mammalia</taxon>
        <taxon>Eutheria</taxon>
        <taxon>Euarchontoglires</taxon>
        <taxon>Glires</taxon>
        <taxon>Rodentia</taxon>
        <taxon>Myomorpha</taxon>
        <taxon>Muroidea</taxon>
        <taxon>Muridae</taxon>
        <taxon>Murinae</taxon>
        <taxon>Mus</taxon>
        <taxon>Mus</taxon>
    </lineage>
</organism>
<proteinExistence type="evidence at protein level"/>
<dbReference type="EMBL" id="AF329877">
    <property type="protein sequence ID" value="AAK15313.2"/>
    <property type="molecule type" value="mRNA"/>
</dbReference>
<dbReference type="EMBL" id="AJ304506">
    <property type="protein sequence ID" value="CAC20705.1"/>
    <property type="molecule type" value="mRNA"/>
</dbReference>
<dbReference type="EMBL" id="AK011355">
    <property type="protein sequence ID" value="BAB27563.1"/>
    <property type="molecule type" value="mRNA"/>
</dbReference>
<dbReference type="EMBL" id="AK029099">
    <property type="protein sequence ID" value="BAC26296.1"/>
    <property type="molecule type" value="mRNA"/>
</dbReference>
<dbReference type="EMBL" id="AK029336">
    <property type="protein sequence ID" value="BAC26402.1"/>
    <property type="molecule type" value="mRNA"/>
</dbReference>
<dbReference type="EMBL" id="AK031710">
    <property type="protein sequence ID" value="BAC27526.1"/>
    <property type="molecule type" value="mRNA"/>
</dbReference>
<dbReference type="EMBL" id="AK031975">
    <property type="protein sequence ID" value="BAC27635.1"/>
    <property type="molecule type" value="mRNA"/>
</dbReference>
<dbReference type="EMBL" id="AK032650">
    <property type="protein sequence ID" value="BAC27971.1"/>
    <property type="molecule type" value="mRNA"/>
</dbReference>
<dbReference type="EMBL" id="AK153438">
    <property type="protein sequence ID" value="BAE31995.1"/>
    <property type="molecule type" value="mRNA"/>
</dbReference>
<dbReference type="EMBL" id="AK169148">
    <property type="protein sequence ID" value="BAE40927.1"/>
    <property type="molecule type" value="mRNA"/>
</dbReference>
<dbReference type="EMBL" id="BC023683">
    <property type="protein sequence ID" value="AAH23683.1"/>
    <property type="molecule type" value="mRNA"/>
</dbReference>
<dbReference type="CCDS" id="CCDS24478.1"/>
<dbReference type="RefSeq" id="NP_076140.2">
    <property type="nucleotide sequence ID" value="NM_023651.4"/>
</dbReference>
<dbReference type="PDB" id="1WXU">
    <property type="method" value="NMR"/>
    <property type="chains" value="A=267-346"/>
</dbReference>
<dbReference type="PDBsum" id="1WXU"/>
<dbReference type="SMR" id="Q9D0K1"/>
<dbReference type="BioGRID" id="215170">
    <property type="interactions" value="2"/>
</dbReference>
<dbReference type="FunCoup" id="Q9D0K1">
    <property type="interactions" value="1126"/>
</dbReference>
<dbReference type="STRING" id="10090.ENSMUSP00000020523"/>
<dbReference type="iPTMnet" id="Q9D0K1"/>
<dbReference type="PhosphoSitePlus" id="Q9D0K1"/>
<dbReference type="SwissPalm" id="Q9D0K1"/>
<dbReference type="PaxDb" id="10090-ENSMUSP00000020523"/>
<dbReference type="PeptideAtlas" id="Q9D0K1"/>
<dbReference type="ProteomicsDB" id="301792"/>
<dbReference type="Pumba" id="Q9D0K1"/>
<dbReference type="Antibodypedia" id="30577">
    <property type="antibodies" value="108 antibodies from 30 providers"/>
</dbReference>
<dbReference type="DNASU" id="72129"/>
<dbReference type="Ensembl" id="ENSMUST00000020523.4">
    <property type="protein sequence ID" value="ENSMUSP00000020523.4"/>
    <property type="gene ID" value="ENSMUSG00000020283.6"/>
</dbReference>
<dbReference type="GeneID" id="72129"/>
<dbReference type="KEGG" id="mmu:72129"/>
<dbReference type="UCSC" id="uc007ifj.1">
    <property type="organism name" value="mouse"/>
</dbReference>
<dbReference type="AGR" id="MGI:1919379"/>
<dbReference type="CTD" id="5194"/>
<dbReference type="MGI" id="MGI:1919379">
    <property type="gene designation" value="Pex13"/>
</dbReference>
<dbReference type="VEuPathDB" id="HostDB:ENSMUSG00000020283"/>
<dbReference type="eggNOG" id="KOG3875">
    <property type="taxonomic scope" value="Eukaryota"/>
</dbReference>
<dbReference type="GeneTree" id="ENSGT00390000016883"/>
<dbReference type="HOGENOM" id="CLU_045457_0_0_1"/>
<dbReference type="InParanoid" id="Q9D0K1"/>
<dbReference type="OMA" id="EGWFPKK"/>
<dbReference type="OrthoDB" id="10037838at2759"/>
<dbReference type="PhylomeDB" id="Q9D0K1"/>
<dbReference type="TreeFam" id="TF327117"/>
<dbReference type="Reactome" id="R-MMU-8866654">
    <property type="pathway name" value="E3 ubiquitin ligases ubiquitinate target proteins"/>
</dbReference>
<dbReference type="Reactome" id="R-MMU-9033241">
    <property type="pathway name" value="Peroxisomal protein import"/>
</dbReference>
<dbReference type="Reactome" id="R-MMU-9603798">
    <property type="pathway name" value="Class I peroxisomal membrane protein import"/>
</dbReference>
<dbReference type="BioGRID-ORCS" id="72129">
    <property type="hits" value="8 hits in 77 CRISPR screens"/>
</dbReference>
<dbReference type="ChiTaRS" id="Pex13">
    <property type="organism name" value="mouse"/>
</dbReference>
<dbReference type="EvolutionaryTrace" id="Q9D0K1"/>
<dbReference type="PRO" id="PR:Q9D0K1"/>
<dbReference type="Proteomes" id="UP000000589">
    <property type="component" value="Chromosome 11"/>
</dbReference>
<dbReference type="RNAct" id="Q9D0K1">
    <property type="molecule type" value="protein"/>
</dbReference>
<dbReference type="Bgee" id="ENSMUSG00000020283">
    <property type="expression patterns" value="Expressed in seminiferous tubule of testis and 255 other cell types or tissues"/>
</dbReference>
<dbReference type="ExpressionAtlas" id="Q9D0K1">
    <property type="expression patterns" value="baseline and differential"/>
</dbReference>
<dbReference type="GO" id="GO:0005778">
    <property type="term" value="C:peroxisomal membrane"/>
    <property type="evidence" value="ECO:0000314"/>
    <property type="project" value="MGI"/>
</dbReference>
<dbReference type="GO" id="GO:0005777">
    <property type="term" value="C:peroxisome"/>
    <property type="evidence" value="ECO:0000314"/>
    <property type="project" value="UniProtKB"/>
</dbReference>
<dbReference type="GO" id="GO:0000268">
    <property type="term" value="F:peroxisome targeting sequence binding"/>
    <property type="evidence" value="ECO:0000304"/>
    <property type="project" value="MGI"/>
</dbReference>
<dbReference type="GO" id="GO:0008320">
    <property type="term" value="F:protein transmembrane transporter activity"/>
    <property type="evidence" value="ECO:0000250"/>
    <property type="project" value="UniProtKB"/>
</dbReference>
<dbReference type="GO" id="GO:0034614">
    <property type="term" value="P:cellular response to reactive oxygen species"/>
    <property type="evidence" value="ECO:0007669"/>
    <property type="project" value="Ensembl"/>
</dbReference>
<dbReference type="GO" id="GO:0021795">
    <property type="term" value="P:cerebral cortex cell migration"/>
    <property type="evidence" value="ECO:0000315"/>
    <property type="project" value="MGI"/>
</dbReference>
<dbReference type="GO" id="GO:0001561">
    <property type="term" value="P:fatty acid alpha-oxidation"/>
    <property type="evidence" value="ECO:0000315"/>
    <property type="project" value="MGI"/>
</dbReference>
<dbReference type="GO" id="GO:0007626">
    <property type="term" value="P:locomotory behavior"/>
    <property type="evidence" value="ECO:0000315"/>
    <property type="project" value="MGI"/>
</dbReference>
<dbReference type="GO" id="GO:0060152">
    <property type="term" value="P:microtubule-based peroxisome localization"/>
    <property type="evidence" value="ECO:0000315"/>
    <property type="project" value="MGI"/>
</dbReference>
<dbReference type="GO" id="GO:0001764">
    <property type="term" value="P:neuron migration"/>
    <property type="evidence" value="ECO:0000315"/>
    <property type="project" value="MGI"/>
</dbReference>
<dbReference type="GO" id="GO:0016560">
    <property type="term" value="P:protein import into peroxisome matrix, docking"/>
    <property type="evidence" value="ECO:0000315"/>
    <property type="project" value="MGI"/>
</dbReference>
<dbReference type="GO" id="GO:0016561">
    <property type="term" value="P:protein import into peroxisome matrix, translocation"/>
    <property type="evidence" value="ECO:0007669"/>
    <property type="project" value="Ensembl"/>
</dbReference>
<dbReference type="GO" id="GO:0001967">
    <property type="term" value="P:suckling behavior"/>
    <property type="evidence" value="ECO:0000315"/>
    <property type="project" value="MGI"/>
</dbReference>
<dbReference type="CDD" id="cd11864">
    <property type="entry name" value="SH3_PEX13_eumet"/>
    <property type="match status" value="1"/>
</dbReference>
<dbReference type="FunFam" id="2.30.30.40:FF:000109">
    <property type="entry name" value="Peroxisomal biogenesis factor 13"/>
    <property type="match status" value="1"/>
</dbReference>
<dbReference type="Gene3D" id="2.30.30.40">
    <property type="entry name" value="SH3 Domains"/>
    <property type="match status" value="1"/>
</dbReference>
<dbReference type="InterPro" id="IPR007223">
    <property type="entry name" value="Peroxin-13_N"/>
</dbReference>
<dbReference type="InterPro" id="IPR035463">
    <property type="entry name" value="Pex13"/>
</dbReference>
<dbReference type="InterPro" id="IPR036028">
    <property type="entry name" value="SH3-like_dom_sf"/>
</dbReference>
<dbReference type="InterPro" id="IPR001452">
    <property type="entry name" value="SH3_domain"/>
</dbReference>
<dbReference type="PANTHER" id="PTHR19332">
    <property type="entry name" value="PEROXISOMAL MEMBRANE PROTEIN PEX13"/>
    <property type="match status" value="1"/>
</dbReference>
<dbReference type="PANTHER" id="PTHR19332:SF1">
    <property type="entry name" value="PEROXISOMAL MEMBRANE PROTEIN PEX13"/>
    <property type="match status" value="1"/>
</dbReference>
<dbReference type="Pfam" id="PF04088">
    <property type="entry name" value="Peroxin-13_N"/>
    <property type="match status" value="1"/>
</dbReference>
<dbReference type="Pfam" id="PF14604">
    <property type="entry name" value="SH3_9"/>
    <property type="match status" value="1"/>
</dbReference>
<dbReference type="PRINTS" id="PR00452">
    <property type="entry name" value="SH3DOMAIN"/>
</dbReference>
<dbReference type="SMART" id="SM00326">
    <property type="entry name" value="SH3"/>
    <property type="match status" value="1"/>
</dbReference>
<dbReference type="SUPFAM" id="SSF50044">
    <property type="entry name" value="SH3-domain"/>
    <property type="match status" value="1"/>
</dbReference>
<dbReference type="PROSITE" id="PS50002">
    <property type="entry name" value="SH3"/>
    <property type="match status" value="1"/>
</dbReference>
<sequence>MASQPPPPPKPWESRRIPGAGPGPGSGPGPTYQSADLGPTLLTRPGQPTLTRVPPPILPRPSQQTGSNNVNTFRPAYSSFSSGYGAYGNSFYGSYSPYSYGYNGLGFNRLRVDDLPPSRFVQQAEESSRGAFQSIESIVHAFASVSMMMDATFSAVYNSFRAVLDVANHFSRLKIHFTKVFSAFALVRTIRYLYRRLQWMMGLRRGSENEDLWAESEGTVACLSAEDQATNSAKSWPIFLFFAVILGGPYLIWKLLSTHNDEVTDNTNWASGEDDHVVARAEYDFVAVSDEEISFRAGDMLNLALKEQQPKVRGWLLASLDGQTTGLIPANYVKILGKRRGRKTIESSTMLKQQQSFTNPTLIKGVTTTNPLDEQEAAFESVFVETNKVSSAPDSTGKNGDKQDL</sequence>
<feature type="chain" id="PRO_0000240662" description="Peroxisomal membrane protein PEX13">
    <location>
        <begin position="1"/>
        <end position="405"/>
    </location>
</feature>
<feature type="topological domain" description="Peroxisomal matrix" evidence="1">
    <location>
        <begin position="1"/>
        <end position="136"/>
    </location>
</feature>
<feature type="transmembrane region" description="Helical" evidence="4">
    <location>
        <begin position="137"/>
        <end position="157"/>
    </location>
</feature>
<feature type="topological domain" description="Cytoplasmic" evidence="8">
    <location>
        <begin position="158"/>
        <end position="176"/>
    </location>
</feature>
<feature type="transmembrane region" description="Helical" evidence="4">
    <location>
        <begin position="177"/>
        <end position="194"/>
    </location>
</feature>
<feature type="topological domain" description="Peroxisomal matrix" evidence="8">
    <location>
        <begin position="195"/>
        <end position="235"/>
    </location>
</feature>
<feature type="transmembrane region" description="Helical" evidence="4">
    <location>
        <begin position="236"/>
        <end position="256"/>
    </location>
</feature>
<feature type="topological domain" description="Cytoplasmic" evidence="1">
    <location>
        <begin position="257"/>
        <end position="405"/>
    </location>
</feature>
<feature type="domain" description="SH3" evidence="5">
    <location>
        <begin position="274"/>
        <end position="338"/>
    </location>
</feature>
<feature type="region of interest" description="Disordered" evidence="6">
    <location>
        <begin position="1"/>
        <end position="71"/>
    </location>
</feature>
<feature type="region of interest" description="Targeting to peroxisomes" evidence="3">
    <location>
        <begin position="147"/>
        <end position="235"/>
    </location>
</feature>
<feature type="region of interest" description="Interaction with PEX19" evidence="3">
    <location>
        <begin position="177"/>
        <end position="198"/>
    </location>
</feature>
<feature type="compositionally biased region" description="Pro residues" evidence="6">
    <location>
        <begin position="1"/>
        <end position="11"/>
    </location>
</feature>
<feature type="compositionally biased region" description="Polar residues" evidence="6">
    <location>
        <begin position="61"/>
        <end position="71"/>
    </location>
</feature>
<feature type="modified residue" description="Phosphoserine" evidence="10">
    <location>
        <position position="356"/>
    </location>
</feature>
<feature type="sequence conflict" description="In Ref. 2; CAC20705." evidence="8" ref="2">
    <original>F</original>
    <variation>C</variation>
    <location>
        <position position="177"/>
    </location>
</feature>
<feature type="sequence conflict" description="In Ref. 3; BAC27635." evidence="8" ref="3">
    <original>M</original>
    <variation>K</variation>
    <location>
        <position position="200"/>
    </location>
</feature>
<feature type="sequence conflict" description="In Ref. 2; CAC20705." evidence="8" ref="2">
    <original>L</original>
    <variation>I</variation>
    <location>
        <position position="203"/>
    </location>
</feature>
<feature type="sequence conflict" description="In Ref. 2; CAC20705." evidence="8" ref="2">
    <original>G</original>
    <variation>S</variation>
    <location>
        <position position="206"/>
    </location>
</feature>
<feature type="sequence conflict" description="In Ref. 3; BAE31995." evidence="8" ref="3">
    <original>D</original>
    <variation>N</variation>
    <location>
        <position position="227"/>
    </location>
</feature>
<feature type="sequence conflict" description="In Ref. 2; CAC20705." evidence="8" ref="2">
    <original>FLF</original>
    <variation>ILS</variation>
    <location>
        <begin position="239"/>
        <end position="241"/>
    </location>
</feature>
<feature type="sequence conflict" description="In Ref. 3; BAE31995." evidence="8" ref="3">
    <original>E</original>
    <variation>G</variation>
    <location>
        <position position="291"/>
    </location>
</feature>
<feature type="turn" evidence="11">
    <location>
        <begin position="269"/>
        <end position="271"/>
    </location>
</feature>
<feature type="strand" evidence="11">
    <location>
        <begin position="272"/>
        <end position="274"/>
    </location>
</feature>
<feature type="strand" evidence="11">
    <location>
        <begin position="279"/>
        <end position="283"/>
    </location>
</feature>
<feature type="strand" evidence="11">
    <location>
        <begin position="288"/>
        <end position="292"/>
    </location>
</feature>
<feature type="turn" evidence="11">
    <location>
        <begin position="306"/>
        <end position="308"/>
    </location>
</feature>
<feature type="strand" evidence="11">
    <location>
        <begin position="316"/>
        <end position="324"/>
    </location>
</feature>
<feature type="strand" evidence="11">
    <location>
        <begin position="326"/>
        <end position="328"/>
    </location>
</feature>
<feature type="strand" evidence="11">
    <location>
        <begin position="333"/>
        <end position="335"/>
    </location>
</feature>
<feature type="turn" evidence="11">
    <location>
        <begin position="343"/>
        <end position="346"/>
    </location>
</feature>
<protein>
    <recommendedName>
        <fullName evidence="8">Peroxisomal membrane protein PEX13</fullName>
    </recommendedName>
    <alternativeName>
        <fullName evidence="8">Peroxin-13</fullName>
    </alternativeName>
</protein>
<name>PEX13_MOUSE</name>
<gene>
    <name evidence="7 9" type="primary">Pex13</name>
</gene>